<name>HGH1_DANRE</name>
<evidence type="ECO:0000255" key="1"/>
<evidence type="ECO:0000256" key="2">
    <source>
        <dbReference type="SAM" id="MobiDB-lite"/>
    </source>
</evidence>
<evidence type="ECO:0000305" key="3"/>
<organism>
    <name type="scientific">Danio rerio</name>
    <name type="common">Zebrafish</name>
    <name type="synonym">Brachydanio rerio</name>
    <dbReference type="NCBI Taxonomy" id="7955"/>
    <lineage>
        <taxon>Eukaryota</taxon>
        <taxon>Metazoa</taxon>
        <taxon>Chordata</taxon>
        <taxon>Craniata</taxon>
        <taxon>Vertebrata</taxon>
        <taxon>Euteleostomi</taxon>
        <taxon>Actinopterygii</taxon>
        <taxon>Neopterygii</taxon>
        <taxon>Teleostei</taxon>
        <taxon>Ostariophysi</taxon>
        <taxon>Cypriniformes</taxon>
        <taxon>Danionidae</taxon>
        <taxon>Danioninae</taxon>
        <taxon>Danio</taxon>
    </lineage>
</organism>
<reference key="1">
    <citation type="submission" date="2004-07" db="EMBL/GenBank/DDBJ databases">
        <authorList>
            <consortium name="NIH - Zebrafish Gene Collection (ZGC) project"/>
        </authorList>
    </citation>
    <scope>NUCLEOTIDE SEQUENCE [LARGE SCALE MRNA]</scope>
    <source>
        <tissue>Brain</tissue>
        <tissue>Ovary</tissue>
    </source>
</reference>
<accession>Q6DGR4</accession>
<accession>A8KBP9</accession>
<proteinExistence type="evidence at transcript level"/>
<keyword id="KW-0175">Coiled coil</keyword>
<keyword id="KW-1185">Reference proteome</keyword>
<protein>
    <recommendedName>
        <fullName>Protein HGH1 homolog</fullName>
    </recommendedName>
</protein>
<feature type="chain" id="PRO_0000331580" description="Protein HGH1 homolog">
    <location>
        <begin position="1"/>
        <end position="377"/>
    </location>
</feature>
<feature type="region of interest" description="Disordered" evidence="2">
    <location>
        <begin position="339"/>
        <end position="377"/>
    </location>
</feature>
<feature type="coiled-coil region" evidence="1">
    <location>
        <begin position="340"/>
        <end position="373"/>
    </location>
</feature>
<feature type="sequence conflict" description="In Ref. 1; AAI54199." evidence="3" ref="1">
    <original>K</original>
    <variation>E</variation>
    <location>
        <position position="303"/>
    </location>
</feature>
<sequence length="377" mass="43200">MLSEDEAKDLLSFLTLEMRADVKGQATGYILGLTGNRDGCRYLQSKPDFLKALVTLTSDPSIAIVKDCFHALINLSADETLHQPLVKETEILSKLIPKLQDPEFVFSDRICTILSNLSRHEQTCRDVFKALQELNVGLDRLVEIFCTEGFNKKASLHYLAPLLSNLTQLPEARHFILDKDRCVIQRLLPFTQYEESITRRGGVVGTLRNCCFDYVHHEWLLSDAVDILPFLLLPLAGPEELSEEENEGLPVDLQYLPEDKRREEDPDIRKMLLETLMLLTATKVGRQILKSKNVYPIMREFHKWEKDPHVISACEKLVQALIGDEPEVGMENLMEVEIPKDVEEKLQELDAKEQEQMEKDKQELEKSQNESPEGLER</sequence>
<gene>
    <name type="primary">hgh1</name>
    <name type="synonym">brp16</name>
    <name type="synonym">fam203a</name>
    <name type="ORF">zgc:92803</name>
</gene>
<comment type="similarity">
    <text evidence="3">Belongs to the HGH1 family.</text>
</comment>
<dbReference type="EMBL" id="BC076275">
    <property type="protein sequence ID" value="AAH76275.1"/>
    <property type="molecule type" value="mRNA"/>
</dbReference>
<dbReference type="EMBL" id="BC154198">
    <property type="protein sequence ID" value="AAI54199.1"/>
    <property type="molecule type" value="mRNA"/>
</dbReference>
<dbReference type="RefSeq" id="NP_001002522.1">
    <property type="nucleotide sequence ID" value="NM_001002522.1"/>
</dbReference>
<dbReference type="SMR" id="Q6DGR4"/>
<dbReference type="FunCoup" id="Q6DGR4">
    <property type="interactions" value="2091"/>
</dbReference>
<dbReference type="STRING" id="7955.ENSDARP00000130997"/>
<dbReference type="PaxDb" id="7955-ENSDARP00000112139"/>
<dbReference type="GeneID" id="436795"/>
<dbReference type="KEGG" id="dre:436795"/>
<dbReference type="AGR" id="ZFIN:ZDB-GENE-040718-228"/>
<dbReference type="CTD" id="51236"/>
<dbReference type="ZFIN" id="ZDB-GENE-040718-228">
    <property type="gene designation" value="hgh1"/>
</dbReference>
<dbReference type="eggNOG" id="KOG2973">
    <property type="taxonomic scope" value="Eukaryota"/>
</dbReference>
<dbReference type="InParanoid" id="Q6DGR4"/>
<dbReference type="OrthoDB" id="338814at2759"/>
<dbReference type="PhylomeDB" id="Q6DGR4"/>
<dbReference type="PRO" id="PR:Q6DGR4"/>
<dbReference type="Proteomes" id="UP000000437">
    <property type="component" value="Chromosome 19"/>
</dbReference>
<dbReference type="Gene3D" id="1.25.10.10">
    <property type="entry name" value="Leucine-rich Repeat Variant"/>
    <property type="match status" value="1"/>
</dbReference>
<dbReference type="InterPro" id="IPR011989">
    <property type="entry name" value="ARM-like"/>
</dbReference>
<dbReference type="InterPro" id="IPR016024">
    <property type="entry name" value="ARM-type_fold"/>
</dbReference>
<dbReference type="InterPro" id="IPR039717">
    <property type="entry name" value="Hgh1"/>
</dbReference>
<dbReference type="InterPro" id="IPR007206">
    <property type="entry name" value="Protein_HGH1_C"/>
</dbReference>
<dbReference type="InterPro" id="IPR007205">
    <property type="entry name" value="Protein_HGH1_N"/>
</dbReference>
<dbReference type="PANTHER" id="PTHR13387">
    <property type="entry name" value="PROTEIN HGH1 HOMOLOG"/>
    <property type="match status" value="1"/>
</dbReference>
<dbReference type="PANTHER" id="PTHR13387:SF9">
    <property type="entry name" value="PROTEIN HGH1 HOMOLOG"/>
    <property type="match status" value="1"/>
</dbReference>
<dbReference type="Pfam" id="PF04063">
    <property type="entry name" value="DUF383"/>
    <property type="match status" value="1"/>
</dbReference>
<dbReference type="Pfam" id="PF04064">
    <property type="entry name" value="DUF384"/>
    <property type="match status" value="1"/>
</dbReference>
<dbReference type="SUPFAM" id="SSF48371">
    <property type="entry name" value="ARM repeat"/>
    <property type="match status" value="1"/>
</dbReference>